<gene>
    <name evidence="1" type="primary">clpS</name>
    <name type="ordered locus">VIBHAR_01566</name>
</gene>
<comment type="function">
    <text evidence="1">Involved in the modulation of the specificity of the ClpAP-mediated ATP-dependent protein degradation.</text>
</comment>
<comment type="subunit">
    <text evidence="1">Binds to the N-terminal domain of the chaperone ClpA.</text>
</comment>
<comment type="similarity">
    <text evidence="1">Belongs to the ClpS family.</text>
</comment>
<protein>
    <recommendedName>
        <fullName evidence="1">ATP-dependent Clp protease adapter protein ClpS</fullName>
    </recommendedName>
</protein>
<sequence>MSKNFEWVTPDSDLLERESTKVQPPKLYNVVLNNDDYTPMDFVIEVLERFFSHDIDKATQIMLKIHYEGKAICGTYSAEIAETKVAQVTMYSRENEHPLLCTMEQA</sequence>
<evidence type="ECO:0000255" key="1">
    <source>
        <dbReference type="HAMAP-Rule" id="MF_00302"/>
    </source>
</evidence>
<dbReference type="EMBL" id="CP000789">
    <property type="protein sequence ID" value="ABU70536.1"/>
    <property type="molecule type" value="Genomic_DNA"/>
</dbReference>
<dbReference type="RefSeq" id="WP_005427554.1">
    <property type="nucleotide sequence ID" value="NC_022269.1"/>
</dbReference>
<dbReference type="SMR" id="A7N1L5"/>
<dbReference type="GeneID" id="83582370"/>
<dbReference type="KEGG" id="vha:VIBHAR_01566"/>
<dbReference type="PATRIC" id="fig|338187.25.peg.1097"/>
<dbReference type="Proteomes" id="UP000008152">
    <property type="component" value="Chromosome I"/>
</dbReference>
<dbReference type="GO" id="GO:0030163">
    <property type="term" value="P:protein catabolic process"/>
    <property type="evidence" value="ECO:0007669"/>
    <property type="project" value="InterPro"/>
</dbReference>
<dbReference type="GO" id="GO:0006508">
    <property type="term" value="P:proteolysis"/>
    <property type="evidence" value="ECO:0007669"/>
    <property type="project" value="UniProtKB-UniRule"/>
</dbReference>
<dbReference type="FunFam" id="3.30.1390.10:FF:000002">
    <property type="entry name" value="ATP-dependent Clp protease adapter protein ClpS"/>
    <property type="match status" value="1"/>
</dbReference>
<dbReference type="Gene3D" id="3.30.1390.10">
    <property type="match status" value="1"/>
</dbReference>
<dbReference type="HAMAP" id="MF_00302">
    <property type="entry name" value="ClpS"/>
    <property type="match status" value="1"/>
</dbReference>
<dbReference type="InterPro" id="IPR022935">
    <property type="entry name" value="ClpS"/>
</dbReference>
<dbReference type="InterPro" id="IPR003769">
    <property type="entry name" value="ClpS_core"/>
</dbReference>
<dbReference type="InterPro" id="IPR014719">
    <property type="entry name" value="Ribosomal_bL12_C/ClpS-like"/>
</dbReference>
<dbReference type="NCBIfam" id="NF000670">
    <property type="entry name" value="PRK00033.1-3"/>
    <property type="match status" value="1"/>
</dbReference>
<dbReference type="NCBIfam" id="NF000672">
    <property type="entry name" value="PRK00033.1-5"/>
    <property type="match status" value="1"/>
</dbReference>
<dbReference type="PANTHER" id="PTHR33473:SF19">
    <property type="entry name" value="ATP-DEPENDENT CLP PROTEASE ADAPTER PROTEIN CLPS"/>
    <property type="match status" value="1"/>
</dbReference>
<dbReference type="PANTHER" id="PTHR33473">
    <property type="entry name" value="ATP-DEPENDENT CLP PROTEASE ADAPTER PROTEIN CLPS1, CHLOROPLASTIC"/>
    <property type="match status" value="1"/>
</dbReference>
<dbReference type="Pfam" id="PF02617">
    <property type="entry name" value="ClpS"/>
    <property type="match status" value="1"/>
</dbReference>
<dbReference type="SUPFAM" id="SSF54736">
    <property type="entry name" value="ClpS-like"/>
    <property type="match status" value="1"/>
</dbReference>
<proteinExistence type="inferred from homology"/>
<accession>A7N1L5</accession>
<organism>
    <name type="scientific">Vibrio campbellii (strain ATCC BAA-1116)</name>
    <dbReference type="NCBI Taxonomy" id="2902295"/>
    <lineage>
        <taxon>Bacteria</taxon>
        <taxon>Pseudomonadati</taxon>
        <taxon>Pseudomonadota</taxon>
        <taxon>Gammaproteobacteria</taxon>
        <taxon>Vibrionales</taxon>
        <taxon>Vibrionaceae</taxon>
        <taxon>Vibrio</taxon>
    </lineage>
</organism>
<feature type="chain" id="PRO_1000022633" description="ATP-dependent Clp protease adapter protein ClpS">
    <location>
        <begin position="1"/>
        <end position="106"/>
    </location>
</feature>
<name>CLPS_VIBC1</name>
<reference key="1">
    <citation type="submission" date="2007-08" db="EMBL/GenBank/DDBJ databases">
        <authorList>
            <consortium name="The Vibrio harveyi Genome Sequencing Project"/>
            <person name="Bassler B."/>
            <person name="Clifton S.W."/>
            <person name="Fulton L."/>
            <person name="Delehaunty K."/>
            <person name="Fronick C."/>
            <person name="Harrison M."/>
            <person name="Markivic C."/>
            <person name="Fulton R."/>
            <person name="Tin-Wollam A.-M."/>
            <person name="Shah N."/>
            <person name="Pepin K."/>
            <person name="Nash W."/>
            <person name="Thiruvilangam P."/>
            <person name="Bhonagiri V."/>
            <person name="Waters C."/>
            <person name="Tu K.C."/>
            <person name="Irgon J."/>
            <person name="Wilson R.K."/>
        </authorList>
    </citation>
    <scope>NUCLEOTIDE SEQUENCE [LARGE SCALE GENOMIC DNA]</scope>
    <source>
        <strain>ATCC BAA-1116 / BB120</strain>
    </source>
</reference>